<evidence type="ECO:0000255" key="1">
    <source>
        <dbReference type="HAMAP-Rule" id="MF_01007"/>
    </source>
</evidence>
<comment type="function">
    <text evidence="1">Specifically methylates the N4 position of cytidine in position 1402 (C1402) of 16S rRNA.</text>
</comment>
<comment type="catalytic activity">
    <reaction evidence="1">
        <text>cytidine(1402) in 16S rRNA + S-adenosyl-L-methionine = N(4)-methylcytidine(1402) in 16S rRNA + S-adenosyl-L-homocysteine + H(+)</text>
        <dbReference type="Rhea" id="RHEA:42928"/>
        <dbReference type="Rhea" id="RHEA-COMP:10286"/>
        <dbReference type="Rhea" id="RHEA-COMP:10287"/>
        <dbReference type="ChEBI" id="CHEBI:15378"/>
        <dbReference type="ChEBI" id="CHEBI:57856"/>
        <dbReference type="ChEBI" id="CHEBI:59789"/>
        <dbReference type="ChEBI" id="CHEBI:74506"/>
        <dbReference type="ChEBI" id="CHEBI:82748"/>
        <dbReference type="EC" id="2.1.1.199"/>
    </reaction>
</comment>
<comment type="subcellular location">
    <subcellularLocation>
        <location evidence="1">Cytoplasm</location>
    </subcellularLocation>
</comment>
<comment type="similarity">
    <text evidence="1">Belongs to the methyltransferase superfamily. RsmH family.</text>
</comment>
<dbReference type="EC" id="2.1.1.199" evidence="1"/>
<dbReference type="EMBL" id="CP000034">
    <property type="protein sequence ID" value="ABB60347.1"/>
    <property type="molecule type" value="Genomic_DNA"/>
</dbReference>
<dbReference type="RefSeq" id="WP_000970466.1">
    <property type="nucleotide sequence ID" value="NC_007606.1"/>
</dbReference>
<dbReference type="RefSeq" id="YP_401836.1">
    <property type="nucleotide sequence ID" value="NC_007606.1"/>
</dbReference>
<dbReference type="SMR" id="Q32K10"/>
<dbReference type="STRING" id="300267.SDY_0112"/>
<dbReference type="EnsemblBacteria" id="ABB60347">
    <property type="protein sequence ID" value="ABB60347"/>
    <property type="gene ID" value="SDY_0112"/>
</dbReference>
<dbReference type="KEGG" id="sdy:SDY_0112"/>
<dbReference type="PATRIC" id="fig|300267.13.peg.131"/>
<dbReference type="HOGENOM" id="CLU_038422_2_0_6"/>
<dbReference type="Proteomes" id="UP000002716">
    <property type="component" value="Chromosome"/>
</dbReference>
<dbReference type="GO" id="GO:0005737">
    <property type="term" value="C:cytoplasm"/>
    <property type="evidence" value="ECO:0007669"/>
    <property type="project" value="UniProtKB-SubCell"/>
</dbReference>
<dbReference type="GO" id="GO:0071424">
    <property type="term" value="F:rRNA (cytosine-N4-)-methyltransferase activity"/>
    <property type="evidence" value="ECO:0007669"/>
    <property type="project" value="UniProtKB-UniRule"/>
</dbReference>
<dbReference type="GO" id="GO:0070475">
    <property type="term" value="P:rRNA base methylation"/>
    <property type="evidence" value="ECO:0007669"/>
    <property type="project" value="UniProtKB-UniRule"/>
</dbReference>
<dbReference type="FunFam" id="1.10.150.170:FF:000001">
    <property type="entry name" value="Ribosomal RNA small subunit methyltransferase H"/>
    <property type="match status" value="1"/>
</dbReference>
<dbReference type="Gene3D" id="1.10.150.170">
    <property type="entry name" value="Putative methyltransferase TM0872, insert domain"/>
    <property type="match status" value="1"/>
</dbReference>
<dbReference type="Gene3D" id="3.40.50.150">
    <property type="entry name" value="Vaccinia Virus protein VP39"/>
    <property type="match status" value="1"/>
</dbReference>
<dbReference type="HAMAP" id="MF_01007">
    <property type="entry name" value="16SrRNA_methyltr_H"/>
    <property type="match status" value="1"/>
</dbReference>
<dbReference type="InterPro" id="IPR002903">
    <property type="entry name" value="RsmH"/>
</dbReference>
<dbReference type="InterPro" id="IPR023397">
    <property type="entry name" value="SAM-dep_MeTrfase_MraW_recog"/>
</dbReference>
<dbReference type="InterPro" id="IPR029063">
    <property type="entry name" value="SAM-dependent_MTases_sf"/>
</dbReference>
<dbReference type="NCBIfam" id="TIGR00006">
    <property type="entry name" value="16S rRNA (cytosine(1402)-N(4))-methyltransferase RsmH"/>
    <property type="match status" value="1"/>
</dbReference>
<dbReference type="PANTHER" id="PTHR11265:SF0">
    <property type="entry name" value="12S RRNA N4-METHYLCYTIDINE METHYLTRANSFERASE"/>
    <property type="match status" value="1"/>
</dbReference>
<dbReference type="PANTHER" id="PTHR11265">
    <property type="entry name" value="S-ADENOSYL-METHYLTRANSFERASE MRAW"/>
    <property type="match status" value="1"/>
</dbReference>
<dbReference type="Pfam" id="PF01795">
    <property type="entry name" value="Methyltransf_5"/>
    <property type="match status" value="1"/>
</dbReference>
<dbReference type="PIRSF" id="PIRSF004486">
    <property type="entry name" value="MraW"/>
    <property type="match status" value="1"/>
</dbReference>
<dbReference type="SUPFAM" id="SSF81799">
    <property type="entry name" value="Putative methyltransferase TM0872, insert domain"/>
    <property type="match status" value="1"/>
</dbReference>
<dbReference type="SUPFAM" id="SSF53335">
    <property type="entry name" value="S-adenosyl-L-methionine-dependent methyltransferases"/>
    <property type="match status" value="1"/>
</dbReference>
<organism>
    <name type="scientific">Shigella dysenteriae serotype 1 (strain Sd197)</name>
    <dbReference type="NCBI Taxonomy" id="300267"/>
    <lineage>
        <taxon>Bacteria</taxon>
        <taxon>Pseudomonadati</taxon>
        <taxon>Pseudomonadota</taxon>
        <taxon>Gammaproteobacteria</taxon>
        <taxon>Enterobacterales</taxon>
        <taxon>Enterobacteriaceae</taxon>
        <taxon>Shigella</taxon>
    </lineage>
</organism>
<protein>
    <recommendedName>
        <fullName evidence="1">Ribosomal RNA small subunit methyltransferase H</fullName>
        <ecNumber evidence="1">2.1.1.199</ecNumber>
    </recommendedName>
    <alternativeName>
        <fullName evidence="1">16S rRNA m(4)C1402 methyltransferase</fullName>
    </alternativeName>
    <alternativeName>
        <fullName evidence="1">rRNA (cytosine-N(4)-)-methyltransferase RsmH</fullName>
    </alternativeName>
</protein>
<reference key="1">
    <citation type="journal article" date="2005" name="Nucleic Acids Res.">
        <title>Genome dynamics and diversity of Shigella species, the etiologic agents of bacillary dysentery.</title>
        <authorList>
            <person name="Yang F."/>
            <person name="Yang J."/>
            <person name="Zhang X."/>
            <person name="Chen L."/>
            <person name="Jiang Y."/>
            <person name="Yan Y."/>
            <person name="Tang X."/>
            <person name="Wang J."/>
            <person name="Xiong Z."/>
            <person name="Dong J."/>
            <person name="Xue Y."/>
            <person name="Zhu Y."/>
            <person name="Xu X."/>
            <person name="Sun L."/>
            <person name="Chen S."/>
            <person name="Nie H."/>
            <person name="Peng J."/>
            <person name="Xu J."/>
            <person name="Wang Y."/>
            <person name="Yuan Z."/>
            <person name="Wen Y."/>
            <person name="Yao Z."/>
            <person name="Shen Y."/>
            <person name="Qiang B."/>
            <person name="Hou Y."/>
            <person name="Yu J."/>
            <person name="Jin Q."/>
        </authorList>
    </citation>
    <scope>NUCLEOTIDE SEQUENCE [LARGE SCALE GENOMIC DNA]</scope>
    <source>
        <strain>Sd197</strain>
    </source>
</reference>
<name>RSMH_SHIDS</name>
<keyword id="KW-0963">Cytoplasm</keyword>
<keyword id="KW-0489">Methyltransferase</keyword>
<keyword id="KW-1185">Reference proteome</keyword>
<keyword id="KW-0698">rRNA processing</keyword>
<keyword id="KW-0949">S-adenosyl-L-methionine</keyword>
<keyword id="KW-0808">Transferase</keyword>
<gene>
    <name evidence="1" type="primary">rsmH</name>
    <name type="synonym">mraW</name>
    <name type="ordered locus">SDY_0112</name>
</gene>
<proteinExistence type="inferred from homology"/>
<sequence>MMENYKHTTVLLDEAVNGLNIRPDGIYIDGTFGRGGHSRLILSQLGEEGRLLAIDRDPQAIAVAKTIDDPRFSIIHGPFSALGEYVAERDLIGKIDGILLDLGVSSPQLDDAERGFSFMRDGPLDMRMDPTCGQSAAEWLQTAEEADIAWVLKTYGEERFAKRIARAIVERNREQPMTRTKELAEVVAAATPVKDKFKHPATRTFQAVRIWVNSELEEIEQALKSSLNVLAPGGRLSIISFHSLEDRIVKRFMRENSRGPQVPAGLPMTEEQLKKLGGRQLRALGKLMPGEEEVAENPRARSSVLRIAERTNV</sequence>
<feature type="chain" id="PRO_0000223564" description="Ribosomal RNA small subunit methyltransferase H">
    <location>
        <begin position="1"/>
        <end position="313"/>
    </location>
</feature>
<feature type="binding site" evidence="1">
    <location>
        <begin position="35"/>
        <end position="37"/>
    </location>
    <ligand>
        <name>S-adenosyl-L-methionine</name>
        <dbReference type="ChEBI" id="CHEBI:59789"/>
    </ligand>
</feature>
<feature type="binding site" evidence="1">
    <location>
        <position position="55"/>
    </location>
    <ligand>
        <name>S-adenosyl-L-methionine</name>
        <dbReference type="ChEBI" id="CHEBI:59789"/>
    </ligand>
</feature>
<feature type="binding site" evidence="1">
    <location>
        <position position="79"/>
    </location>
    <ligand>
        <name>S-adenosyl-L-methionine</name>
        <dbReference type="ChEBI" id="CHEBI:59789"/>
    </ligand>
</feature>
<feature type="binding site" evidence="1">
    <location>
        <position position="101"/>
    </location>
    <ligand>
        <name>S-adenosyl-L-methionine</name>
        <dbReference type="ChEBI" id="CHEBI:59789"/>
    </ligand>
</feature>
<feature type="binding site" evidence="1">
    <location>
        <position position="108"/>
    </location>
    <ligand>
        <name>S-adenosyl-L-methionine</name>
        <dbReference type="ChEBI" id="CHEBI:59789"/>
    </ligand>
</feature>
<accession>Q32K10</accession>